<keyword id="KW-0472">Membrane</keyword>
<keyword id="KW-1185">Reference proteome</keyword>
<keyword id="KW-0812">Transmembrane</keyword>
<keyword id="KW-1133">Transmembrane helix</keyword>
<name>SIM18_HUMAN</name>
<sequence>MASSHWNETTTSVYQYLGFQVQKIYPFHDNWNTACFVILLLFIFTVVSLVVLAFLYEVLDCCCCVKNKTVKDLKSEPNPLRSMMDNIRKRETEVV</sequence>
<proteinExistence type="predicted"/>
<dbReference type="EMBL" id="DR033682">
    <property type="status" value="NOT_ANNOTATED_CDS"/>
    <property type="molecule type" value="mRNA"/>
</dbReference>
<dbReference type="EMBL" id="AC103959">
    <property type="status" value="NOT_ANNOTATED_CDS"/>
    <property type="molecule type" value="Genomic_DNA"/>
</dbReference>
<dbReference type="EMBL" id="AC102945">
    <property type="status" value="NOT_ANNOTATED_CDS"/>
    <property type="molecule type" value="Genomic_DNA"/>
</dbReference>
<dbReference type="CCDS" id="CCDS56529.1"/>
<dbReference type="RefSeq" id="NP_001193776.1">
    <property type="nucleotide sequence ID" value="NM_001206847.2"/>
</dbReference>
<dbReference type="RefSeq" id="XP_016868432.1">
    <property type="nucleotide sequence ID" value="XM_017012943.2"/>
</dbReference>
<dbReference type="RefSeq" id="XP_024302818.1">
    <property type="nucleotide sequence ID" value="XM_024447050.2"/>
</dbReference>
<dbReference type="RefSeq" id="XP_054215501.1">
    <property type="nucleotide sequence ID" value="XM_054359526.1"/>
</dbReference>
<dbReference type="RefSeq" id="XP_054215502.1">
    <property type="nucleotide sequence ID" value="XM_054359527.1"/>
</dbReference>
<dbReference type="SMR" id="P0DKX4"/>
<dbReference type="STRING" id="9606.ENSP00000428858"/>
<dbReference type="iPTMnet" id="P0DKX4"/>
<dbReference type="PhosphoSitePlus" id="P0DKX4"/>
<dbReference type="BioMuta" id="SMIM18"/>
<dbReference type="DMDM" id="460425421"/>
<dbReference type="MassIVE" id="P0DKX4"/>
<dbReference type="PaxDb" id="9606-ENSP00000428858"/>
<dbReference type="PeptideAtlas" id="P0DKX4"/>
<dbReference type="Antibodypedia" id="74040">
    <property type="antibodies" value="4 antibodies from 4 providers"/>
</dbReference>
<dbReference type="DNASU" id="100507341"/>
<dbReference type="Ensembl" id="ENST00000517349.2">
    <property type="protein sequence ID" value="ENSP00000428858.1"/>
    <property type="gene ID" value="ENSG00000253457.4"/>
</dbReference>
<dbReference type="GeneID" id="100507341"/>
<dbReference type="KEGG" id="hsa:100507341"/>
<dbReference type="MANE-Select" id="ENST00000517349.2">
    <property type="protein sequence ID" value="ENSP00000428858.1"/>
    <property type="RefSeq nucleotide sequence ID" value="NM_001206847.2"/>
    <property type="RefSeq protein sequence ID" value="NP_001193776.1"/>
</dbReference>
<dbReference type="UCSC" id="uc022atn.2">
    <property type="organism name" value="human"/>
</dbReference>
<dbReference type="AGR" id="HGNC:42973"/>
<dbReference type="CTD" id="100507341"/>
<dbReference type="GeneCards" id="SMIM18"/>
<dbReference type="HGNC" id="HGNC:42973">
    <property type="gene designation" value="SMIM18"/>
</dbReference>
<dbReference type="HPA" id="ENSG00000253457">
    <property type="expression patterns" value="Group enriched (brain, pituitary gland, retina)"/>
</dbReference>
<dbReference type="neXtProt" id="NX_P0DKX4"/>
<dbReference type="OpenTargets" id="ENSG00000253457"/>
<dbReference type="VEuPathDB" id="HostDB:ENSG00000253457"/>
<dbReference type="eggNOG" id="ENOG502S8D3">
    <property type="taxonomic scope" value="Eukaryota"/>
</dbReference>
<dbReference type="GeneTree" id="ENSGT00410000029064"/>
<dbReference type="HOGENOM" id="CLU_178645_0_0_1"/>
<dbReference type="InParanoid" id="P0DKX4"/>
<dbReference type="OMA" id="IYQYLGF"/>
<dbReference type="OrthoDB" id="9944050at2759"/>
<dbReference type="PAN-GO" id="P0DKX4">
    <property type="GO annotations" value="0 GO annotations based on evolutionary models"/>
</dbReference>
<dbReference type="PathwayCommons" id="P0DKX4"/>
<dbReference type="BioGRID-ORCS" id="100507341">
    <property type="hits" value="9 hits in 1100 CRISPR screens"/>
</dbReference>
<dbReference type="Pharos" id="P0DKX4">
    <property type="development level" value="Tdark"/>
</dbReference>
<dbReference type="PRO" id="PR:P0DKX4"/>
<dbReference type="Proteomes" id="UP000005640">
    <property type="component" value="Chromosome 8"/>
</dbReference>
<dbReference type="RNAct" id="P0DKX4">
    <property type="molecule type" value="protein"/>
</dbReference>
<dbReference type="Bgee" id="ENSG00000253457">
    <property type="expression patterns" value="Expressed in cortical plate and 81 other cell types or tissues"/>
</dbReference>
<dbReference type="ExpressionAtlas" id="P0DKX4">
    <property type="expression patterns" value="baseline and differential"/>
</dbReference>
<dbReference type="GO" id="GO:0016020">
    <property type="term" value="C:membrane"/>
    <property type="evidence" value="ECO:0007669"/>
    <property type="project" value="UniProtKB-SubCell"/>
</dbReference>
<dbReference type="CDD" id="cd20255">
    <property type="entry name" value="CASIMO1_SMIM22"/>
    <property type="match status" value="1"/>
</dbReference>
<dbReference type="InterPro" id="IPR053081">
    <property type="entry name" value="SIM_Modulators"/>
</dbReference>
<dbReference type="InterPro" id="IPR031671">
    <property type="entry name" value="SMIM5/18/22"/>
</dbReference>
<dbReference type="PANTHER" id="PTHR36982">
    <property type="entry name" value="CLCA DOMAIN-CONTAINING PROTEIN"/>
    <property type="match status" value="1"/>
</dbReference>
<dbReference type="PANTHER" id="PTHR36982:SF1">
    <property type="entry name" value="SMALL INTEGRAL MEMBRANE PROTEIN 18"/>
    <property type="match status" value="1"/>
</dbReference>
<dbReference type="Pfam" id="PF15831">
    <property type="entry name" value="SMIM5_18_22"/>
    <property type="match status" value="1"/>
</dbReference>
<organism>
    <name type="scientific">Homo sapiens</name>
    <name type="common">Human</name>
    <dbReference type="NCBI Taxonomy" id="9606"/>
    <lineage>
        <taxon>Eukaryota</taxon>
        <taxon>Metazoa</taxon>
        <taxon>Chordata</taxon>
        <taxon>Craniata</taxon>
        <taxon>Vertebrata</taxon>
        <taxon>Euteleostomi</taxon>
        <taxon>Mammalia</taxon>
        <taxon>Eutheria</taxon>
        <taxon>Euarchontoglires</taxon>
        <taxon>Primates</taxon>
        <taxon>Haplorrhini</taxon>
        <taxon>Catarrhini</taxon>
        <taxon>Hominidae</taxon>
        <taxon>Homo</taxon>
    </lineage>
</organism>
<evidence type="ECO:0000255" key="1"/>
<evidence type="ECO:0000305" key="2"/>
<protein>
    <recommendedName>
        <fullName>Small integral membrane protein 18</fullName>
    </recommendedName>
</protein>
<accession>P0DKX4</accession>
<feature type="chain" id="PRO_0000421256" description="Small integral membrane protein 18">
    <location>
        <begin position="1"/>
        <end position="95"/>
    </location>
</feature>
<feature type="transmembrane region" description="Helical" evidence="1">
    <location>
        <begin position="35"/>
        <end position="55"/>
    </location>
</feature>
<gene>
    <name type="primary">SMIM18</name>
</gene>
<comment type="subcellular location">
    <subcellularLocation>
        <location evidence="2">Membrane</location>
        <topology evidence="2">Single-pass membrane protein</topology>
    </subcellularLocation>
</comment>
<comment type="caution">
    <text evidence="2">Encoded in intron of the gene GTF2E2 (opposite strand). Confirmed by numerous ESTs.</text>
</comment>
<reference key="1">
    <citation type="journal article" date="2005" name="Genomics">
        <title>Discovery of 342 putative new genes from the analysis of 5'-end-sequenced full-length-enriched cDNA human transcripts.</title>
        <authorList>
            <person name="Dalla E."/>
            <person name="Mignone F."/>
            <person name="Verardo R."/>
            <person name="Marchionni L."/>
            <person name="Marzinotto S."/>
            <person name="Lazarevic D."/>
            <person name="Reid J.F."/>
            <person name="Marzio R."/>
            <person name="Klaric E."/>
            <person name="Licastro D."/>
            <person name="Marcuzzi G."/>
            <person name="Gambetta R."/>
            <person name="Pierotti M.A."/>
            <person name="Pesole G."/>
            <person name="Schneider C."/>
        </authorList>
    </citation>
    <scope>NUCLEOTIDE SEQUENCE [MRNA]</scope>
    <source>
        <tissue>Fetal brain</tissue>
    </source>
</reference>
<reference key="2">
    <citation type="journal article" date="2006" name="Nature">
        <title>DNA sequence and analysis of human chromosome 8.</title>
        <authorList>
            <person name="Nusbaum C."/>
            <person name="Mikkelsen T.S."/>
            <person name="Zody M.C."/>
            <person name="Asakawa S."/>
            <person name="Taudien S."/>
            <person name="Garber M."/>
            <person name="Kodira C.D."/>
            <person name="Schueler M.G."/>
            <person name="Shimizu A."/>
            <person name="Whittaker C.A."/>
            <person name="Chang J.L."/>
            <person name="Cuomo C.A."/>
            <person name="Dewar K."/>
            <person name="FitzGerald M.G."/>
            <person name="Yang X."/>
            <person name="Allen N.R."/>
            <person name="Anderson S."/>
            <person name="Asakawa T."/>
            <person name="Blechschmidt K."/>
            <person name="Bloom T."/>
            <person name="Borowsky M.L."/>
            <person name="Butler J."/>
            <person name="Cook A."/>
            <person name="Corum B."/>
            <person name="DeArellano K."/>
            <person name="DeCaprio D."/>
            <person name="Dooley K.T."/>
            <person name="Dorris L. III"/>
            <person name="Engels R."/>
            <person name="Gloeckner G."/>
            <person name="Hafez N."/>
            <person name="Hagopian D.S."/>
            <person name="Hall J.L."/>
            <person name="Ishikawa S.K."/>
            <person name="Jaffe D.B."/>
            <person name="Kamat A."/>
            <person name="Kudoh J."/>
            <person name="Lehmann R."/>
            <person name="Lokitsang T."/>
            <person name="Macdonald P."/>
            <person name="Major J.E."/>
            <person name="Matthews C.D."/>
            <person name="Mauceli E."/>
            <person name="Menzel U."/>
            <person name="Mihalev A.H."/>
            <person name="Minoshima S."/>
            <person name="Murayama Y."/>
            <person name="Naylor J.W."/>
            <person name="Nicol R."/>
            <person name="Nguyen C."/>
            <person name="O'Leary S.B."/>
            <person name="O'Neill K."/>
            <person name="Parker S.C.J."/>
            <person name="Polley A."/>
            <person name="Raymond C.K."/>
            <person name="Reichwald K."/>
            <person name="Rodriguez J."/>
            <person name="Sasaki T."/>
            <person name="Schilhabel M."/>
            <person name="Siddiqui R."/>
            <person name="Smith C.L."/>
            <person name="Sneddon T.P."/>
            <person name="Talamas J.A."/>
            <person name="Tenzin P."/>
            <person name="Topham K."/>
            <person name="Venkataraman V."/>
            <person name="Wen G."/>
            <person name="Yamazaki S."/>
            <person name="Young S.K."/>
            <person name="Zeng Q."/>
            <person name="Zimmer A.R."/>
            <person name="Rosenthal A."/>
            <person name="Birren B.W."/>
            <person name="Platzer M."/>
            <person name="Shimizu N."/>
            <person name="Lander E.S."/>
        </authorList>
    </citation>
    <scope>NUCLEOTIDE SEQUENCE [LARGE SCALE GENOMIC DNA]</scope>
</reference>